<accession>A0A1D0BRC1</accession>
<protein>
    <recommendedName>
        <fullName evidence="1">U16-hexatoxin-Hi1a</fullName>
        <shortName evidence="1">U16-HXTX-Hi1a</shortName>
    </recommendedName>
    <alternativeName>
        <fullName evidence="1">SF21 peptide</fullName>
    </alternativeName>
</protein>
<dbReference type="EMBL" id="HACE01000100">
    <property type="protein sequence ID" value="CDZ18884.1"/>
    <property type="molecule type" value="mRNA"/>
</dbReference>
<dbReference type="GO" id="GO:0005576">
    <property type="term" value="C:extracellular region"/>
    <property type="evidence" value="ECO:0007669"/>
    <property type="project" value="UniProtKB-SubCell"/>
</dbReference>
<dbReference type="GO" id="GO:0099106">
    <property type="term" value="F:ion channel regulator activity"/>
    <property type="evidence" value="ECO:0007669"/>
    <property type="project" value="UniProtKB-KW"/>
</dbReference>
<dbReference type="GO" id="GO:0090729">
    <property type="term" value="F:toxin activity"/>
    <property type="evidence" value="ECO:0007669"/>
    <property type="project" value="UniProtKB-KW"/>
</dbReference>
<name>TG1A_HADIN</name>
<proteinExistence type="evidence at transcript level"/>
<evidence type="ECO:0000303" key="1">
    <source>
    </source>
</evidence>
<evidence type="ECO:0000305" key="2"/>
<evidence type="ECO:0000305" key="3">
    <source>
    </source>
</evidence>
<evidence type="ECO:0000312" key="4">
    <source>
        <dbReference type="EMBL" id="CDZ18884.1"/>
    </source>
</evidence>
<keyword id="KW-0165">Cleavage on pair of basic residues</keyword>
<keyword id="KW-1015">Disulfide bond</keyword>
<keyword id="KW-0872">Ion channel impairing toxin</keyword>
<keyword id="KW-0964">Secreted</keyword>
<keyword id="KW-0732">Signal</keyword>
<keyword id="KW-0800">Toxin</keyword>
<reference key="1">
    <citation type="journal article" date="2020" name="Proc. Natl. Acad. Sci. U.S.A.">
        <title>Structural venomics reveals evolution of a complex venom by duplication and diversification of an ancient peptide-encoding gene.</title>
        <authorList>
            <person name="Pineda S.S."/>
            <person name="Chin Y.K."/>
            <person name="Undheim E.A.B."/>
            <person name="Senff S."/>
            <person name="Mobli M."/>
            <person name="Dauly C."/>
            <person name="Escoubas P."/>
            <person name="Nicholson G.M."/>
            <person name="Kaas Q."/>
            <person name="Guo S."/>
            <person name="Herzig V."/>
            <person name="Mattick J.S."/>
            <person name="King G.F."/>
        </authorList>
    </citation>
    <scope>NUCLEOTIDE SEQUENCE [MRNA]</scope>
    <source>
        <tissue>Venom gland</tissue>
    </source>
</reference>
<reference evidence="4" key="2">
    <citation type="thesis" date="2012" institute="The University of Queensland" country="Australia">
        <title>Probing the chemical diversity of venom from the Australian Funnel-web spider Hadronyche infensa.</title>
        <authorList>
            <person name="Pineda S.S."/>
        </authorList>
    </citation>
    <scope>NUCLEOTIDE SEQUENCE [MRNA]</scope>
    <source>
        <tissue>Venom gland</tissue>
    </source>
</reference>
<reference evidence="4" key="3">
    <citation type="submission" date="2014-07" db="EMBL/GenBank/DDBJ databases">
        <authorList>
            <person name="Zhang J.E."/>
            <person name="Yang H."/>
            <person name="Guo J."/>
            <person name="Deng Z."/>
            <person name="Luo H."/>
            <person name="Luo M."/>
            <person name="Zhao B."/>
        </authorList>
    </citation>
    <scope>NUCLEOTIDE SEQUENCE [MRNA]</scope>
    <source>
        <tissue>Venom gland</tissue>
    </source>
</reference>
<sequence length="109" mass="12650">LTGHLCCMMIWWQATQVISPPLPVIREENNSHKMGVSLFPLKRVVTTSSTQLEMIFNCLCSRVVRTLCSRTQETLVRIQLGQNKASFHLLKSPSRRFIFNCYRAIFMFI</sequence>
<comment type="function">
    <text evidence="2">Probable ion channel inhibitor.</text>
</comment>
<comment type="subcellular location">
    <subcellularLocation>
        <location evidence="3">Secreted</location>
    </subcellularLocation>
</comment>
<comment type="tissue specificity">
    <text evidence="3">Expressed by the venom gland.</text>
</comment>
<comment type="PTM">
    <text evidence="2">Contains 2 disulfide bonds.</text>
</comment>
<feature type="signal peptide" evidence="3">
    <location>
        <begin position="1" status="less than"/>
        <end position="16"/>
    </location>
</feature>
<feature type="propeptide" id="PRO_0000459678" evidence="3">
    <location>
        <begin position="17"/>
        <end position="43"/>
    </location>
</feature>
<feature type="chain" id="PRO_5008897019" description="U16-hexatoxin-Hi1a" evidence="3">
    <location>
        <begin position="44"/>
        <end position="109"/>
    </location>
</feature>
<feature type="non-terminal residue" evidence="4">
    <location>
        <position position="1"/>
    </location>
</feature>
<organism>
    <name type="scientific">Hadronyche infensa</name>
    <name type="common">Fraser island funnel-web spider</name>
    <name type="synonym">Atrax infensus</name>
    <dbReference type="NCBI Taxonomy" id="153481"/>
    <lineage>
        <taxon>Eukaryota</taxon>
        <taxon>Metazoa</taxon>
        <taxon>Ecdysozoa</taxon>
        <taxon>Arthropoda</taxon>
        <taxon>Chelicerata</taxon>
        <taxon>Arachnida</taxon>
        <taxon>Araneae</taxon>
        <taxon>Mygalomorphae</taxon>
        <taxon>Hexathelidae</taxon>
        <taxon>Hadronyche</taxon>
    </lineage>
</organism>